<feature type="chain" id="PRO_0000398186" description="Vetispiradiene synthase 3">
    <location>
        <begin position="1" status="less than"/>
        <end position="350"/>
    </location>
</feature>
<feature type="short sequence motif" description="DDXXD motif">
    <location>
        <begin position="103"/>
        <end position="107"/>
    </location>
</feature>
<feature type="binding site" evidence="1">
    <location>
        <position position="103"/>
    </location>
    <ligand>
        <name>Mg(2+)</name>
        <dbReference type="ChEBI" id="CHEBI:18420"/>
        <label>1</label>
    </ligand>
</feature>
<feature type="binding site" evidence="1">
    <location>
        <position position="103"/>
    </location>
    <ligand>
        <name>Mg(2+)</name>
        <dbReference type="ChEBI" id="CHEBI:18420"/>
        <label>2</label>
    </ligand>
</feature>
<feature type="binding site" evidence="1">
    <location>
        <position position="107"/>
    </location>
    <ligand>
        <name>Mg(2+)</name>
        <dbReference type="ChEBI" id="CHEBI:18420"/>
        <label>1</label>
    </ligand>
</feature>
<feature type="binding site" evidence="1">
    <location>
        <position position="107"/>
    </location>
    <ligand>
        <name>Mg(2+)</name>
        <dbReference type="ChEBI" id="CHEBI:18420"/>
        <label>2</label>
    </ligand>
</feature>
<feature type="binding site" evidence="1">
    <location>
        <position position="246"/>
    </location>
    <ligand>
        <name>Mg(2+)</name>
        <dbReference type="ChEBI" id="CHEBI:18420"/>
        <label>3</label>
    </ligand>
</feature>
<feature type="binding site" evidence="1">
    <location>
        <position position="250"/>
    </location>
    <ligand>
        <name>Mg(2+)</name>
        <dbReference type="ChEBI" id="CHEBI:18420"/>
        <label>3</label>
    </ligand>
</feature>
<feature type="binding site" evidence="1">
    <location>
        <position position="254"/>
    </location>
    <ligand>
        <name>Mg(2+)</name>
        <dbReference type="ChEBI" id="CHEBI:18420"/>
        <label>3</label>
    </ligand>
</feature>
<feature type="non-terminal residue">
    <location>
        <position position="1"/>
    </location>
</feature>
<evidence type="ECO:0000250" key="1"/>
<evidence type="ECO:0000269" key="2">
    <source>
    </source>
</evidence>
<evidence type="ECO:0000305" key="3"/>
<protein>
    <recommendedName>
        <fullName>Vetispiradiene synthase 3</fullName>
        <shortName>HVS3</shortName>
        <ecNumber>4.2.3.21</ecNumber>
    </recommendedName>
</protein>
<accession>Q39980</accession>
<dbReference type="EC" id="4.2.3.21"/>
<dbReference type="EMBL" id="U20190">
    <property type="protein sequence ID" value="AAA86339.1"/>
    <property type="molecule type" value="mRNA"/>
</dbReference>
<dbReference type="PIR" id="C56118">
    <property type="entry name" value="C56118"/>
</dbReference>
<dbReference type="SMR" id="Q39980"/>
<dbReference type="KEGG" id="ag:AAA86339"/>
<dbReference type="UniPathway" id="UPA00213"/>
<dbReference type="GO" id="GO:0005737">
    <property type="term" value="C:cytoplasm"/>
    <property type="evidence" value="ECO:0007669"/>
    <property type="project" value="UniProtKB-SubCell"/>
</dbReference>
<dbReference type="GO" id="GO:0000287">
    <property type="term" value="F:magnesium ion binding"/>
    <property type="evidence" value="ECO:0007669"/>
    <property type="project" value="InterPro"/>
</dbReference>
<dbReference type="GO" id="GO:0034003">
    <property type="term" value="F:vetispiradiene synthase activity"/>
    <property type="evidence" value="ECO:0007669"/>
    <property type="project" value="UniProtKB-EC"/>
</dbReference>
<dbReference type="GO" id="GO:0016102">
    <property type="term" value="P:diterpenoid biosynthetic process"/>
    <property type="evidence" value="ECO:0007669"/>
    <property type="project" value="InterPro"/>
</dbReference>
<dbReference type="CDD" id="cd00684">
    <property type="entry name" value="Terpene_cyclase_plant_C1"/>
    <property type="match status" value="1"/>
</dbReference>
<dbReference type="FunFam" id="1.10.600.10:FF:000007">
    <property type="entry name" value="Isoprene synthase, chloroplastic"/>
    <property type="match status" value="1"/>
</dbReference>
<dbReference type="Gene3D" id="1.10.600.10">
    <property type="entry name" value="Farnesyl Diphosphate Synthase"/>
    <property type="match status" value="1"/>
</dbReference>
<dbReference type="InterPro" id="IPR008949">
    <property type="entry name" value="Isoprenoid_synthase_dom_sf"/>
</dbReference>
<dbReference type="InterPro" id="IPR034741">
    <property type="entry name" value="Terpene_cyclase-like_1_C"/>
</dbReference>
<dbReference type="InterPro" id="IPR044814">
    <property type="entry name" value="Terpene_cyclase_plant_C1"/>
</dbReference>
<dbReference type="InterPro" id="IPR050148">
    <property type="entry name" value="Terpene_synthase-like"/>
</dbReference>
<dbReference type="InterPro" id="IPR005630">
    <property type="entry name" value="Terpene_synthase_metal-bd"/>
</dbReference>
<dbReference type="PANTHER" id="PTHR31225">
    <property type="entry name" value="OS04G0344100 PROTEIN-RELATED"/>
    <property type="match status" value="1"/>
</dbReference>
<dbReference type="PANTHER" id="PTHR31225:SF253">
    <property type="entry name" value="SESQUITERPENE SYNTHASE 31"/>
    <property type="match status" value="1"/>
</dbReference>
<dbReference type="Pfam" id="PF03936">
    <property type="entry name" value="Terpene_synth_C"/>
    <property type="match status" value="1"/>
</dbReference>
<dbReference type="SFLD" id="SFLDG01019">
    <property type="entry name" value="Terpene_Cyclase_Like_1_C_Termi"/>
    <property type="match status" value="1"/>
</dbReference>
<dbReference type="SFLD" id="SFLDG01604">
    <property type="entry name" value="Terpene_Cyclase_Like_1_C_Termi"/>
    <property type="match status" value="1"/>
</dbReference>
<dbReference type="SUPFAM" id="SSF48576">
    <property type="entry name" value="Terpenoid synthases"/>
    <property type="match status" value="1"/>
</dbReference>
<organism>
    <name type="scientific">Hyoscyamus muticus</name>
    <name type="common">Egyptian henbane</name>
    <dbReference type="NCBI Taxonomy" id="35626"/>
    <lineage>
        <taxon>Eukaryota</taxon>
        <taxon>Viridiplantae</taxon>
        <taxon>Streptophyta</taxon>
        <taxon>Embryophyta</taxon>
        <taxon>Tracheophyta</taxon>
        <taxon>Spermatophyta</taxon>
        <taxon>Magnoliopsida</taxon>
        <taxon>eudicotyledons</taxon>
        <taxon>Gunneridae</taxon>
        <taxon>Pentapetalae</taxon>
        <taxon>asterids</taxon>
        <taxon>lamiids</taxon>
        <taxon>Solanales</taxon>
        <taxon>Solanaceae</taxon>
        <taxon>Solanoideae</taxon>
        <taxon>Hyoscyameae</taxon>
        <taxon>Hyoscyamus</taxon>
    </lineage>
</organism>
<comment type="function">
    <text>Sesquiterpene synthase that catalyzes the formation of vetispiradiene from trans,trans-farnesyl diphosphate. The initial internal cyclization produces the monocyclic intermediate germacrene A.</text>
</comment>
<comment type="catalytic activity">
    <reaction evidence="2">
        <text>(2E,6E)-farnesyl diphosphate = (-)-vetispiradiene + diphosphate</text>
        <dbReference type="Rhea" id="RHEA:10340"/>
        <dbReference type="ChEBI" id="CHEBI:33019"/>
        <dbReference type="ChEBI" id="CHEBI:46971"/>
        <dbReference type="ChEBI" id="CHEBI:175763"/>
        <dbReference type="EC" id="4.2.3.21"/>
    </reaction>
</comment>
<comment type="cofactor">
    <cofactor evidence="1">
        <name>Mg(2+)</name>
        <dbReference type="ChEBI" id="CHEBI:18420"/>
    </cofactor>
    <text evidence="1">Binds 3 Mg(2+) ions per subunit.</text>
</comment>
<comment type="pathway">
    <text>Secondary metabolite biosynthesis; terpenoid biosynthesis.</text>
</comment>
<comment type="subcellular location">
    <subcellularLocation>
        <location evidence="3">Cytoplasm</location>
    </subcellularLocation>
</comment>
<comment type="induction">
    <text evidence="2">By elicitor from R.solani.</text>
</comment>
<comment type="domain">
    <text>The Asp-Asp-Xaa-Xaa-Asp/Glu (DDXXD/E) motif is important for the catalytic activity, presumably through binding to Mg(2+).</text>
</comment>
<comment type="similarity">
    <text evidence="3">Belongs to the terpene synthase family. Tpsa subfamily.</text>
</comment>
<keyword id="KW-0963">Cytoplasm</keyword>
<keyword id="KW-0456">Lyase</keyword>
<keyword id="KW-0460">Magnesium</keyword>
<keyword id="KW-0479">Metal-binding</keyword>
<sequence length="350" mass="41104">LHKSIPRVETRYFITIYEEEELKNDVLLRFAKLDFNLLQMLHKQELTEVSMWWKDLDFVTTLPYARDRAVECYFWTVGVYAEPQYSEARVMLAKTIAMISIVDDTFDAYGIVKELEVYTDAIQRWDINQIDRLPDYMKISYKVLLDLYKDYETELSKDGRSEVVHYAKERMKEIVRNYFVEAKWFIEGYMPPVSEYLNNRLATSTYYLLTTTSYLGMKCANKEDFEWLTKNPKILEANVTLCRVIDDIATYEVEKGRGQIATGIECYMRDYGVSTEEAMEKFQEMAEIAWKDVNEGILRPTPVSAKILTRILNLARIIDVTYLHNQDGYTHPEKVLKPHIIALVVDSIEI</sequence>
<reference key="1">
    <citation type="journal article" date="1995" name="J. Biol. Chem.">
        <title>Cloning and bacterial expression of a sesquiterpene cyclase from Hyoscyamus muticus and its molecular comparison to related terpene cyclases.</title>
        <authorList>
            <person name="Back K."/>
            <person name="Chappell J."/>
        </authorList>
    </citation>
    <scope>NUCLEOTIDE SEQUENCE [MRNA]</scope>
    <scope>CATALYTIC ACTIVITY</scope>
    <scope>INDUCTION BY ELICITOR</scope>
</reference>
<proteinExistence type="evidence at protein level"/>
<name>VTSS3_HYOMU</name>